<sequence>MPDVTLTTLQGLKQSGEKIAMLTCYDATFAHTASQAGVDVLLVGDSLGMVLQGHDSTLPVSNEEMAYHTACVKRGNKGSLIVTDLAFESSHSVAQTLADAVRLMQAGAHMVKLEGGAWLAEPIARLAQMGVPVCAHLGLTPQAVNLFGGFKVQGRQETQARQLRADAIALEQAGAAMLLLECVPSVLAEEITQAVKIPVIGIGAGAATDGQVLVMHDMLGLSLTGRSPKFVKDFMQGQESIPAAIAAYVRAVKDVSFPAAEHGFNA</sequence>
<reference key="1">
    <citation type="journal article" date="2006" name="Genome Biol.">
        <title>Genomic analysis reveals that Pseudomonas aeruginosa virulence is combinatorial.</title>
        <authorList>
            <person name="Lee D.G."/>
            <person name="Urbach J.M."/>
            <person name="Wu G."/>
            <person name="Liberati N.T."/>
            <person name="Feinbaum R.L."/>
            <person name="Miyata S."/>
            <person name="Diggins L.T."/>
            <person name="He J."/>
            <person name="Saucier M."/>
            <person name="Deziel E."/>
            <person name="Friedman L."/>
            <person name="Li L."/>
            <person name="Grills G."/>
            <person name="Montgomery K."/>
            <person name="Kucherlapati R."/>
            <person name="Rahme L.G."/>
            <person name="Ausubel F.M."/>
        </authorList>
    </citation>
    <scope>NUCLEOTIDE SEQUENCE [LARGE SCALE GENOMIC DNA]</scope>
    <source>
        <strain>UCBPP-PA14</strain>
    </source>
</reference>
<accession>Q02FU3</accession>
<gene>
    <name evidence="1" type="primary">panB2</name>
    <name type="ordered locus">PA14_62580</name>
</gene>
<proteinExistence type="inferred from homology"/>
<dbReference type="EC" id="2.1.2.11" evidence="1"/>
<dbReference type="EMBL" id="CP000438">
    <property type="protein sequence ID" value="ABJ14112.1"/>
    <property type="molecule type" value="Genomic_DNA"/>
</dbReference>
<dbReference type="SMR" id="Q02FU3"/>
<dbReference type="KEGG" id="pau:PA14_62580"/>
<dbReference type="PseudoCAP" id="PA14_62580"/>
<dbReference type="HOGENOM" id="CLU_036645_1_0_6"/>
<dbReference type="BioCyc" id="PAER208963:G1G74-5291-MONOMER"/>
<dbReference type="UniPathway" id="UPA00028">
    <property type="reaction ID" value="UER00003"/>
</dbReference>
<dbReference type="Proteomes" id="UP000000653">
    <property type="component" value="Chromosome"/>
</dbReference>
<dbReference type="GO" id="GO:0005737">
    <property type="term" value="C:cytoplasm"/>
    <property type="evidence" value="ECO:0007669"/>
    <property type="project" value="UniProtKB-SubCell"/>
</dbReference>
<dbReference type="GO" id="GO:0003864">
    <property type="term" value="F:3-methyl-2-oxobutanoate hydroxymethyltransferase activity"/>
    <property type="evidence" value="ECO:0007669"/>
    <property type="project" value="UniProtKB-UniRule"/>
</dbReference>
<dbReference type="GO" id="GO:0000287">
    <property type="term" value="F:magnesium ion binding"/>
    <property type="evidence" value="ECO:0007669"/>
    <property type="project" value="TreeGrafter"/>
</dbReference>
<dbReference type="GO" id="GO:0015940">
    <property type="term" value="P:pantothenate biosynthetic process"/>
    <property type="evidence" value="ECO:0007669"/>
    <property type="project" value="UniProtKB-UniRule"/>
</dbReference>
<dbReference type="CDD" id="cd06557">
    <property type="entry name" value="KPHMT-like"/>
    <property type="match status" value="1"/>
</dbReference>
<dbReference type="FunFam" id="3.20.20.60:FF:000003">
    <property type="entry name" value="3-methyl-2-oxobutanoate hydroxymethyltransferase"/>
    <property type="match status" value="1"/>
</dbReference>
<dbReference type="Gene3D" id="3.20.20.60">
    <property type="entry name" value="Phosphoenolpyruvate-binding domains"/>
    <property type="match status" value="1"/>
</dbReference>
<dbReference type="HAMAP" id="MF_00156">
    <property type="entry name" value="PanB"/>
    <property type="match status" value="1"/>
</dbReference>
<dbReference type="InterPro" id="IPR003700">
    <property type="entry name" value="Pantoate_hydroxy_MeTrfase"/>
</dbReference>
<dbReference type="InterPro" id="IPR015813">
    <property type="entry name" value="Pyrv/PenolPyrv_kinase-like_dom"/>
</dbReference>
<dbReference type="InterPro" id="IPR040442">
    <property type="entry name" value="Pyrv_kinase-like_dom_sf"/>
</dbReference>
<dbReference type="NCBIfam" id="TIGR00222">
    <property type="entry name" value="panB"/>
    <property type="match status" value="1"/>
</dbReference>
<dbReference type="NCBIfam" id="NF001452">
    <property type="entry name" value="PRK00311.1"/>
    <property type="match status" value="1"/>
</dbReference>
<dbReference type="PANTHER" id="PTHR20881">
    <property type="entry name" value="3-METHYL-2-OXOBUTANOATE HYDROXYMETHYLTRANSFERASE"/>
    <property type="match status" value="1"/>
</dbReference>
<dbReference type="PANTHER" id="PTHR20881:SF0">
    <property type="entry name" value="3-METHYL-2-OXOBUTANOATE HYDROXYMETHYLTRANSFERASE"/>
    <property type="match status" value="1"/>
</dbReference>
<dbReference type="Pfam" id="PF02548">
    <property type="entry name" value="Pantoate_transf"/>
    <property type="match status" value="1"/>
</dbReference>
<dbReference type="PIRSF" id="PIRSF000388">
    <property type="entry name" value="Pantoate_hydroxy_MeTrfase"/>
    <property type="match status" value="1"/>
</dbReference>
<dbReference type="SUPFAM" id="SSF51621">
    <property type="entry name" value="Phosphoenolpyruvate/pyruvate domain"/>
    <property type="match status" value="1"/>
</dbReference>
<protein>
    <recommendedName>
        <fullName evidence="1">3-methyl-2-oxobutanoate hydroxymethyltransferase 2</fullName>
        <ecNumber evidence="1">2.1.2.11</ecNumber>
    </recommendedName>
    <alternativeName>
        <fullName evidence="1">Ketopantoate hydroxymethyltransferase 2</fullName>
        <shortName evidence="1">KPHMT 2</shortName>
    </alternativeName>
</protein>
<name>PANB2_PSEAB</name>
<evidence type="ECO:0000255" key="1">
    <source>
        <dbReference type="HAMAP-Rule" id="MF_00156"/>
    </source>
</evidence>
<organism>
    <name type="scientific">Pseudomonas aeruginosa (strain UCBPP-PA14)</name>
    <dbReference type="NCBI Taxonomy" id="208963"/>
    <lineage>
        <taxon>Bacteria</taxon>
        <taxon>Pseudomonadati</taxon>
        <taxon>Pseudomonadota</taxon>
        <taxon>Gammaproteobacteria</taxon>
        <taxon>Pseudomonadales</taxon>
        <taxon>Pseudomonadaceae</taxon>
        <taxon>Pseudomonas</taxon>
    </lineage>
</organism>
<feature type="chain" id="PRO_0000297334" description="3-methyl-2-oxobutanoate hydroxymethyltransferase 2">
    <location>
        <begin position="1"/>
        <end position="266"/>
    </location>
</feature>
<feature type="active site" description="Proton acceptor" evidence="1">
    <location>
        <position position="181"/>
    </location>
</feature>
<feature type="binding site" evidence="1">
    <location>
        <begin position="45"/>
        <end position="46"/>
    </location>
    <ligand>
        <name>3-methyl-2-oxobutanoate</name>
        <dbReference type="ChEBI" id="CHEBI:11851"/>
    </ligand>
</feature>
<feature type="binding site" evidence="1">
    <location>
        <position position="45"/>
    </location>
    <ligand>
        <name>Mg(2+)</name>
        <dbReference type="ChEBI" id="CHEBI:18420"/>
    </ligand>
</feature>
<feature type="binding site" evidence="1">
    <location>
        <position position="84"/>
    </location>
    <ligand>
        <name>3-methyl-2-oxobutanoate</name>
        <dbReference type="ChEBI" id="CHEBI:11851"/>
    </ligand>
</feature>
<feature type="binding site" evidence="1">
    <location>
        <position position="84"/>
    </location>
    <ligand>
        <name>Mg(2+)</name>
        <dbReference type="ChEBI" id="CHEBI:18420"/>
    </ligand>
</feature>
<feature type="binding site" evidence="1">
    <location>
        <position position="112"/>
    </location>
    <ligand>
        <name>3-methyl-2-oxobutanoate</name>
        <dbReference type="ChEBI" id="CHEBI:11851"/>
    </ligand>
</feature>
<feature type="binding site" evidence="1">
    <location>
        <position position="114"/>
    </location>
    <ligand>
        <name>Mg(2+)</name>
        <dbReference type="ChEBI" id="CHEBI:18420"/>
    </ligand>
</feature>
<comment type="function">
    <text evidence="1">Catalyzes the reversible reaction in which hydroxymethyl group from 5,10-methylenetetrahydrofolate is transferred onto alpha-ketoisovalerate to form ketopantoate.</text>
</comment>
<comment type="catalytic activity">
    <reaction evidence="1">
        <text>3-methyl-2-oxobutanoate + (6R)-5,10-methylene-5,6,7,8-tetrahydrofolate + H2O = 2-dehydropantoate + (6S)-5,6,7,8-tetrahydrofolate</text>
        <dbReference type="Rhea" id="RHEA:11824"/>
        <dbReference type="ChEBI" id="CHEBI:11561"/>
        <dbReference type="ChEBI" id="CHEBI:11851"/>
        <dbReference type="ChEBI" id="CHEBI:15377"/>
        <dbReference type="ChEBI" id="CHEBI:15636"/>
        <dbReference type="ChEBI" id="CHEBI:57453"/>
        <dbReference type="EC" id="2.1.2.11"/>
    </reaction>
</comment>
<comment type="cofactor">
    <cofactor evidence="1">
        <name>Mg(2+)</name>
        <dbReference type="ChEBI" id="CHEBI:18420"/>
    </cofactor>
    <text evidence="1">Binds 1 Mg(2+) ion per subunit.</text>
</comment>
<comment type="pathway">
    <text evidence="1">Cofactor biosynthesis; (R)-pantothenate biosynthesis; (R)-pantoate from 3-methyl-2-oxobutanoate: step 1/2.</text>
</comment>
<comment type="subunit">
    <text evidence="1">Homodecamer; pentamer of dimers.</text>
</comment>
<comment type="subcellular location">
    <subcellularLocation>
        <location evidence="1">Cytoplasm</location>
    </subcellularLocation>
</comment>
<comment type="similarity">
    <text evidence="1">Belongs to the PanB family.</text>
</comment>
<keyword id="KW-0963">Cytoplasm</keyword>
<keyword id="KW-0460">Magnesium</keyword>
<keyword id="KW-0479">Metal-binding</keyword>
<keyword id="KW-0566">Pantothenate biosynthesis</keyword>
<keyword id="KW-0808">Transferase</keyword>